<name>Y3298_VIBCM</name>
<keyword id="KW-0574">Periplasm</keyword>
<keyword id="KW-0732">Signal</keyword>
<accession>C3LVF6</accession>
<reference key="1">
    <citation type="journal article" date="2008" name="PLoS ONE">
        <title>A recalibrated molecular clock and independent origins for the cholera pandemic clones.</title>
        <authorList>
            <person name="Feng L."/>
            <person name="Reeves P.R."/>
            <person name="Lan R."/>
            <person name="Ren Y."/>
            <person name="Gao C."/>
            <person name="Zhou Z."/>
            <person name="Ren Y."/>
            <person name="Cheng J."/>
            <person name="Wang W."/>
            <person name="Wang J."/>
            <person name="Qian W."/>
            <person name="Li D."/>
            <person name="Wang L."/>
        </authorList>
    </citation>
    <scope>NUCLEOTIDE SEQUENCE [LARGE SCALE GENOMIC DNA]</scope>
    <source>
        <strain>M66-2</strain>
    </source>
</reference>
<gene>
    <name type="ordered locus">VCM66_A0498</name>
</gene>
<evidence type="ECO:0000255" key="1">
    <source>
        <dbReference type="HAMAP-Rule" id="MF_00780"/>
    </source>
</evidence>
<comment type="subcellular location">
    <subcellularLocation>
        <location evidence="1">Periplasm</location>
    </subcellularLocation>
</comment>
<comment type="similarity">
    <text evidence="1">Belongs to the UPF0312 family. Type 1 subfamily.</text>
</comment>
<proteinExistence type="inferred from homology"/>
<dbReference type="EMBL" id="CP001234">
    <property type="protein sequence ID" value="ACP07461.1"/>
    <property type="molecule type" value="Genomic_DNA"/>
</dbReference>
<dbReference type="RefSeq" id="WP_000753206.1">
    <property type="nucleotide sequence ID" value="NC_012580.1"/>
</dbReference>
<dbReference type="SMR" id="C3LVF6"/>
<dbReference type="KEGG" id="vcm:VCM66_A0498"/>
<dbReference type="HOGENOM" id="CLU_071003_1_2_6"/>
<dbReference type="Proteomes" id="UP000001217">
    <property type="component" value="Chromosome II"/>
</dbReference>
<dbReference type="GO" id="GO:0042597">
    <property type="term" value="C:periplasmic space"/>
    <property type="evidence" value="ECO:0007669"/>
    <property type="project" value="UniProtKB-SubCell"/>
</dbReference>
<dbReference type="Gene3D" id="2.40.128.110">
    <property type="entry name" value="Lipid/polyisoprenoid-binding, YceI-like"/>
    <property type="match status" value="1"/>
</dbReference>
<dbReference type="HAMAP" id="MF_00780">
    <property type="entry name" value="UPF0312"/>
    <property type="match status" value="1"/>
</dbReference>
<dbReference type="InterPro" id="IPR007372">
    <property type="entry name" value="Lipid/polyisoprenoid-bd_YceI"/>
</dbReference>
<dbReference type="InterPro" id="IPR036761">
    <property type="entry name" value="TTHA0802/YceI-like_sf"/>
</dbReference>
<dbReference type="InterPro" id="IPR023480">
    <property type="entry name" value="UPF0312/YceI"/>
</dbReference>
<dbReference type="NCBIfam" id="NF002994">
    <property type="entry name" value="PRK03757.1"/>
    <property type="match status" value="1"/>
</dbReference>
<dbReference type="PANTHER" id="PTHR34406">
    <property type="entry name" value="PROTEIN YCEI"/>
    <property type="match status" value="1"/>
</dbReference>
<dbReference type="PANTHER" id="PTHR34406:SF1">
    <property type="entry name" value="PROTEIN YCEI"/>
    <property type="match status" value="1"/>
</dbReference>
<dbReference type="Pfam" id="PF04264">
    <property type="entry name" value="YceI"/>
    <property type="match status" value="1"/>
</dbReference>
<dbReference type="SMART" id="SM00867">
    <property type="entry name" value="YceI"/>
    <property type="match status" value="1"/>
</dbReference>
<dbReference type="SUPFAM" id="SSF101874">
    <property type="entry name" value="YceI-like"/>
    <property type="match status" value="1"/>
</dbReference>
<sequence>MKKTLMAVGLAAVMSIPFAANAADYVIDTKGAHASINFKVNHLGYSYIKGRFNKFDGEFSYDPANIAASSVVVNVDTRSLDSNHAERDKHIRSADFIDASKYSTATFKSTEVVDKGNGQLEVKGDLTLHGQTKPIVINAEFIGAGQDPWGGQRSGFAGTTRLELKDFGIQVMGASSYVDMELHVEGVQK</sequence>
<protein>
    <recommendedName>
        <fullName evidence="1">UPF0312 protein VCM66_A0498</fullName>
    </recommendedName>
</protein>
<feature type="signal peptide" evidence="1">
    <location>
        <begin position="1"/>
        <end position="22"/>
    </location>
</feature>
<feature type="chain" id="PRO_1000148468" description="UPF0312 protein VCM66_A0498">
    <location>
        <begin position="23"/>
        <end position="189"/>
    </location>
</feature>
<organism>
    <name type="scientific">Vibrio cholerae serotype O1 (strain M66-2)</name>
    <dbReference type="NCBI Taxonomy" id="579112"/>
    <lineage>
        <taxon>Bacteria</taxon>
        <taxon>Pseudomonadati</taxon>
        <taxon>Pseudomonadota</taxon>
        <taxon>Gammaproteobacteria</taxon>
        <taxon>Vibrionales</taxon>
        <taxon>Vibrionaceae</taxon>
        <taxon>Vibrio</taxon>
    </lineage>
</organism>